<name>PAHO_CERSI</name>
<protein>
    <recommendedName>
        <fullName evidence="3">Pancreatic polypeptide</fullName>
        <shortName evidence="3">PP</shortName>
    </recommendedName>
</protein>
<reference key="1">
    <citation type="journal article" date="1991" name="Gen. Comp. Endocrinol.">
        <title>Primary structure of pancreatic polypeptide from four species of Perissodactyla (Przewalski's horse, zebra, rhino, tapir).</title>
        <authorList>
            <person name="Henry J.S."/>
            <person name="Lance V.A."/>
            <person name="Conlon J.M."/>
        </authorList>
    </citation>
    <scope>PROTEIN SEQUENCE</scope>
    <scope>AMIDATION AT TYR-36</scope>
    <source>
        <tissue>Pancreas</tissue>
    </source>
</reference>
<keyword id="KW-0027">Amidation</keyword>
<keyword id="KW-0903">Direct protein sequencing</keyword>
<keyword id="KW-0372">Hormone</keyword>
<keyword id="KW-0964">Secreted</keyword>
<organism>
    <name type="scientific">Ceratotherium simum</name>
    <name type="common">White rhinoceros</name>
    <name type="synonym">Square-lipped rhinoceros</name>
    <dbReference type="NCBI Taxonomy" id="9807"/>
    <lineage>
        <taxon>Eukaryota</taxon>
        <taxon>Metazoa</taxon>
        <taxon>Chordata</taxon>
        <taxon>Craniata</taxon>
        <taxon>Vertebrata</taxon>
        <taxon>Euteleostomi</taxon>
        <taxon>Mammalia</taxon>
        <taxon>Eutheria</taxon>
        <taxon>Laurasiatheria</taxon>
        <taxon>Perissodactyla</taxon>
        <taxon>Rhinocerotidae</taxon>
        <taxon>Ceratotherium</taxon>
    </lineage>
</organism>
<comment type="function">
    <text evidence="1">Hormone secreted by pancreatic cells that acts as a regulator of pancreatic and gastrointestinal functions probably by signaling through the G protein-coupled receptor NPY4R2.</text>
</comment>
<comment type="subcellular location">
    <subcellularLocation>
        <location evidence="1">Secreted</location>
    </subcellularLocation>
</comment>
<comment type="similarity">
    <text evidence="4">Belongs to the NPY family.</text>
</comment>
<sequence>SPLEPVYPGDNATPEEMAQYAAELRRYINMLTRPRY</sequence>
<dbReference type="PIR" id="B61132">
    <property type="entry name" value="B61132"/>
</dbReference>
<dbReference type="SMR" id="P37999"/>
<dbReference type="GO" id="GO:0005615">
    <property type="term" value="C:extracellular space"/>
    <property type="evidence" value="ECO:0007669"/>
    <property type="project" value="TreeGrafter"/>
</dbReference>
<dbReference type="GO" id="GO:0005184">
    <property type="term" value="F:neuropeptide hormone activity"/>
    <property type="evidence" value="ECO:0007669"/>
    <property type="project" value="TreeGrafter"/>
</dbReference>
<dbReference type="GO" id="GO:0031841">
    <property type="term" value="F:neuropeptide Y receptor binding"/>
    <property type="evidence" value="ECO:0007669"/>
    <property type="project" value="TreeGrafter"/>
</dbReference>
<dbReference type="GO" id="GO:0007631">
    <property type="term" value="P:feeding behavior"/>
    <property type="evidence" value="ECO:0007669"/>
    <property type="project" value="TreeGrafter"/>
</dbReference>
<dbReference type="GO" id="GO:0007218">
    <property type="term" value="P:neuropeptide signaling pathway"/>
    <property type="evidence" value="ECO:0007669"/>
    <property type="project" value="TreeGrafter"/>
</dbReference>
<dbReference type="CDD" id="cd00126">
    <property type="entry name" value="PAH"/>
    <property type="match status" value="1"/>
</dbReference>
<dbReference type="Gene3D" id="6.10.250.900">
    <property type="match status" value="1"/>
</dbReference>
<dbReference type="InterPro" id="IPR001955">
    <property type="entry name" value="Pancreatic_hormone-like"/>
</dbReference>
<dbReference type="InterPro" id="IPR020392">
    <property type="entry name" value="Pancreatic_hormone-like_CS"/>
</dbReference>
<dbReference type="PANTHER" id="PTHR10533">
    <property type="entry name" value="NEUROPEPTIDE Y/PANCREATIC HORMONE/PEPTIDE YY"/>
    <property type="match status" value="1"/>
</dbReference>
<dbReference type="PANTHER" id="PTHR10533:SF2">
    <property type="entry name" value="PANCREATIC POLYPEPTIDE PROHORMONE"/>
    <property type="match status" value="1"/>
</dbReference>
<dbReference type="Pfam" id="PF00159">
    <property type="entry name" value="Hormone_3"/>
    <property type="match status" value="1"/>
</dbReference>
<dbReference type="PRINTS" id="PR00278">
    <property type="entry name" value="PANCHORMONE"/>
</dbReference>
<dbReference type="SMART" id="SM00309">
    <property type="entry name" value="PAH"/>
    <property type="match status" value="1"/>
</dbReference>
<dbReference type="PROSITE" id="PS00265">
    <property type="entry name" value="PANCREATIC_HORMONE_1"/>
    <property type="match status" value="1"/>
</dbReference>
<dbReference type="PROSITE" id="PS50276">
    <property type="entry name" value="PANCREATIC_HORMONE_2"/>
    <property type="match status" value="1"/>
</dbReference>
<evidence type="ECO:0000250" key="1">
    <source>
        <dbReference type="UniProtKB" id="P01298"/>
    </source>
</evidence>
<evidence type="ECO:0000269" key="2">
    <source>
    </source>
</evidence>
<evidence type="ECO:0000303" key="3">
    <source>
    </source>
</evidence>
<evidence type="ECO:0000305" key="4"/>
<gene>
    <name type="primary">PPY</name>
</gene>
<accession>P37999</accession>
<proteinExistence type="evidence at protein level"/>
<feature type="peptide" id="PRO_0000044794" description="Pancreatic polypeptide">
    <location>
        <begin position="1"/>
        <end position="36"/>
    </location>
</feature>
<feature type="modified residue" description="Tyrosine amide" evidence="2">
    <location>
        <position position="36"/>
    </location>
</feature>